<organism>
    <name type="scientific">Bos taurus</name>
    <name type="common">Bovine</name>
    <dbReference type="NCBI Taxonomy" id="9913"/>
    <lineage>
        <taxon>Eukaryota</taxon>
        <taxon>Metazoa</taxon>
        <taxon>Chordata</taxon>
        <taxon>Craniata</taxon>
        <taxon>Vertebrata</taxon>
        <taxon>Euteleostomi</taxon>
        <taxon>Mammalia</taxon>
        <taxon>Eutheria</taxon>
        <taxon>Laurasiatheria</taxon>
        <taxon>Artiodactyla</taxon>
        <taxon>Ruminantia</taxon>
        <taxon>Pecora</taxon>
        <taxon>Bovidae</taxon>
        <taxon>Bovinae</taxon>
        <taxon>Bos</taxon>
    </lineage>
</organism>
<keyword id="KW-0002">3D-structure</keyword>
<keyword id="KW-0968">Cytoplasmic vesicle</keyword>
<keyword id="KW-0375">Hydrogen ion transport</keyword>
<keyword id="KW-0406">Ion transport</keyword>
<keyword id="KW-0472">Membrane</keyword>
<keyword id="KW-1185">Reference proteome</keyword>
<keyword id="KW-0812">Transmembrane</keyword>
<keyword id="KW-1133">Transmembrane helix</keyword>
<keyword id="KW-0813">Transport</keyword>
<gene>
    <name type="primary">ATP6V0B</name>
</gene>
<protein>
    <recommendedName>
        <fullName evidence="4">V-type proton ATPase 21 kDa proteolipid subunit c''</fullName>
        <shortName evidence="4">V-ATPase 21 kDa proteolipid subunit c''</shortName>
    </recommendedName>
    <alternativeName>
        <fullName evidence="4">Vacuolar proton pump 21 kDa proteolipid subunit c''</fullName>
    </alternativeName>
</protein>
<evidence type="ECO:0000250" key="1">
    <source>
        <dbReference type="UniProtKB" id="Q91V37"/>
    </source>
</evidence>
<evidence type="ECO:0000255" key="2"/>
<evidence type="ECO:0000269" key="3">
    <source>
    </source>
</evidence>
<evidence type="ECO:0000305" key="4"/>
<evidence type="ECO:0000305" key="5">
    <source>
    </source>
</evidence>
<evidence type="ECO:0007744" key="6">
    <source>
        <dbReference type="PDB" id="6XBW"/>
    </source>
</evidence>
<evidence type="ECO:0007744" key="7">
    <source>
        <dbReference type="PDB" id="6XBY"/>
    </source>
</evidence>
<evidence type="ECO:0007829" key="8">
    <source>
        <dbReference type="PDB" id="6XBW"/>
    </source>
</evidence>
<comment type="function">
    <text evidence="3">Proton-conducting pore forming subunit of the V0 complex of vacuolar(H+)-ATPase (V-ATPase), a multisubunit enzyme composed of a peripheral complex (V1) that hydrolyzes ATP and a membrane integral complex (V0) that translocates protons (PubMed:32764564). V-ATPase is responsible for acidifying and maintaining the pH of intracellular compartments and in some cell types, is targeted to the plasma membrane, where it is responsible for acidifying the extracellular environment (PubMed:32764564).</text>
</comment>
<comment type="subunit">
    <text evidence="1 3">V-ATPase is a heteromultimeric enzyme made up of two complexes: the ATP-hydrolytic V1 complex and the proton translocation V0 complex (PubMed:32764564). The V1 complex consists of three catalytic AB heterodimers that form a heterohexamer, three peripheral stalks each consisting of EG heterodimers, one central rotor including subunits D and F, and the regulatory subunits C and H (PubMed:32764564). The proton translocation complex V0 consists of the proton transport subunit a, a ring of proteolipid subunits c9c'', rotary subunit d, subunits e and f, and the accessory subunits ATP6AP1/Ac45 and ATP6AP2/PRR (PubMed:32764564). Interacts with IFITM3 (By similarity). Interacts with TM4SF19; this interaction inhibits V1-V0 complex assembly (By similarity).</text>
</comment>
<comment type="subcellular location">
    <subcellularLocation>
        <location evidence="3">Cytoplasmic vesicle</location>
        <location evidence="3">Clathrin-coated vesicle membrane</location>
        <topology evidence="2">Multi-pass membrane protein</topology>
    </subcellularLocation>
</comment>
<comment type="tissue specificity">
    <text evidence="3">Expressed in brain (at protein level).</text>
</comment>
<comment type="similarity">
    <text evidence="4">Belongs to the V-ATPase proteolipid subunit family.</text>
</comment>
<reference key="1">
    <citation type="submission" date="2005-12" db="EMBL/GenBank/DDBJ databases">
        <authorList>
            <consortium name="NIH - Mammalian Gene Collection (MGC) project"/>
        </authorList>
    </citation>
    <scope>NUCLEOTIDE SEQUENCE [LARGE SCALE MRNA]</scope>
    <source>
        <strain>Crossbred X Angus</strain>
        <tissue>Liver</tissue>
    </source>
</reference>
<reference evidence="6 7" key="2">
    <citation type="journal article" date="2020" name="Nat. Commun.">
        <title>Cryo-EM structures of intact V-ATPase from bovine brain.</title>
        <authorList>
            <person name="Wang R."/>
            <person name="Long T."/>
            <person name="Hassan A."/>
            <person name="Wang J."/>
            <person name="Sun Y."/>
            <person name="Xie X.S."/>
            <person name="Li X."/>
        </authorList>
    </citation>
    <scope>STRUCTURE BY ELECTRON MICROSCOPY (3.37 ANGSTROMS)</scope>
    <scope>FUNCTION</scope>
    <scope>IDENTIFICATION IN THE V-ATPASE COMPLEX</scope>
    <scope>SUBCELLULAR LOCATION</scope>
    <scope>IDENTIFICATION BY MASS SPECTROMETRY</scope>
    <scope>TISSUE SPECIFICITY</scope>
</reference>
<proteinExistence type="evidence at protein level"/>
<name>VATO_BOVIN</name>
<accession>Q2TA24</accession>
<sequence length="205" mass="21519">MTGLVLLYSGVFVAFWACLLVVGICYTIFDLGFRFDVAWFLTETSPFMWSNLGIGLAISLSVVGAAWGIYITGSSIIGGGVKAPRIKTKNLVSIIFCEAVAIYGIIMAIVISNMAEPFSATDPKAIGHRNYHAGYSMFGAGLTVGLSNLFCGVCVGIVGSGAALADAQNPSLFVKILIVEIFGSAIGLFGVIVAILQTSRVKMGD</sequence>
<dbReference type="EMBL" id="BC111150">
    <property type="protein sequence ID" value="AAI11151.1"/>
    <property type="molecule type" value="mRNA"/>
</dbReference>
<dbReference type="RefSeq" id="NP_001033127.1">
    <property type="nucleotide sequence ID" value="NM_001038038.2"/>
</dbReference>
<dbReference type="PDB" id="6XBW">
    <property type="method" value="EM"/>
    <property type="resolution" value="3.37 A"/>
    <property type="chains" value="b=1-205"/>
</dbReference>
<dbReference type="PDB" id="6XBY">
    <property type="method" value="EM"/>
    <property type="resolution" value="3.79 A"/>
    <property type="chains" value="b=1-205"/>
</dbReference>
<dbReference type="PDB" id="7KHR">
    <property type="method" value="EM"/>
    <property type="resolution" value="3.62 A"/>
    <property type="chains" value="b=1-205"/>
</dbReference>
<dbReference type="PDBsum" id="6XBW"/>
<dbReference type="PDBsum" id="6XBY"/>
<dbReference type="PDBsum" id="7KHR"/>
<dbReference type="EMDB" id="EMD-22121"/>
<dbReference type="EMDB" id="EMD-22122"/>
<dbReference type="EMDB" id="EMD-22880"/>
<dbReference type="SMR" id="Q2TA24"/>
<dbReference type="FunCoup" id="Q2TA24">
    <property type="interactions" value="2389"/>
</dbReference>
<dbReference type="STRING" id="9913.ENSBTAP00000025144"/>
<dbReference type="PaxDb" id="9913-ENSBTAP00000025144"/>
<dbReference type="Ensembl" id="ENSBTAT00000025144.5">
    <property type="protein sequence ID" value="ENSBTAP00000025144.4"/>
    <property type="gene ID" value="ENSBTAG00000018889.6"/>
</dbReference>
<dbReference type="GeneID" id="505684"/>
<dbReference type="KEGG" id="bta:505684"/>
<dbReference type="CTD" id="533"/>
<dbReference type="VEuPathDB" id="HostDB:ENSBTAG00000018889"/>
<dbReference type="VGNC" id="VGNC:26310">
    <property type="gene designation" value="ATP6V0B"/>
</dbReference>
<dbReference type="eggNOG" id="KOG0233">
    <property type="taxonomic scope" value="Eukaryota"/>
</dbReference>
<dbReference type="GeneTree" id="ENSGT00550000075120"/>
<dbReference type="HOGENOM" id="CLU_085752_0_0_1"/>
<dbReference type="InParanoid" id="Q2TA24"/>
<dbReference type="OMA" id="TSPYMWG"/>
<dbReference type="OrthoDB" id="10264021at2759"/>
<dbReference type="TreeFam" id="TF314946"/>
<dbReference type="Reactome" id="R-BTA-1222556">
    <property type="pathway name" value="ROS and RNS production in phagocytes"/>
</dbReference>
<dbReference type="Reactome" id="R-BTA-77387">
    <property type="pathway name" value="Insulin receptor recycling"/>
</dbReference>
<dbReference type="Reactome" id="R-BTA-917977">
    <property type="pathway name" value="Transferrin endocytosis and recycling"/>
</dbReference>
<dbReference type="Reactome" id="R-BTA-9639288">
    <property type="pathway name" value="Amino acids regulate mTORC1"/>
</dbReference>
<dbReference type="Reactome" id="R-BTA-983712">
    <property type="pathway name" value="Ion channel transport"/>
</dbReference>
<dbReference type="Proteomes" id="UP000009136">
    <property type="component" value="Chromosome 3"/>
</dbReference>
<dbReference type="Bgee" id="ENSBTAG00000018889">
    <property type="expression patterns" value="Expressed in retina and 105 other cell types or tissues"/>
</dbReference>
<dbReference type="GO" id="GO:0030665">
    <property type="term" value="C:clathrin-coated vesicle membrane"/>
    <property type="evidence" value="ECO:0007669"/>
    <property type="project" value="UniProtKB-SubCell"/>
</dbReference>
<dbReference type="GO" id="GO:0005768">
    <property type="term" value="C:endosome"/>
    <property type="evidence" value="ECO:0007669"/>
    <property type="project" value="Ensembl"/>
</dbReference>
<dbReference type="GO" id="GO:0016020">
    <property type="term" value="C:membrane"/>
    <property type="evidence" value="ECO:0000318"/>
    <property type="project" value="GO_Central"/>
</dbReference>
<dbReference type="GO" id="GO:0000220">
    <property type="term" value="C:vacuolar proton-transporting V-type ATPase, V0 domain"/>
    <property type="evidence" value="ECO:0000314"/>
    <property type="project" value="UniProtKB"/>
</dbReference>
<dbReference type="GO" id="GO:0046961">
    <property type="term" value="F:proton-transporting ATPase activity, rotational mechanism"/>
    <property type="evidence" value="ECO:0007669"/>
    <property type="project" value="InterPro"/>
</dbReference>
<dbReference type="GO" id="GO:0045851">
    <property type="term" value="P:pH reduction"/>
    <property type="evidence" value="ECO:0000305"/>
    <property type="project" value="UniProtKB"/>
</dbReference>
<dbReference type="GO" id="GO:1902600">
    <property type="term" value="P:proton transmembrane transport"/>
    <property type="evidence" value="ECO:0000305"/>
    <property type="project" value="UniProtKB"/>
</dbReference>
<dbReference type="CDD" id="cd18177">
    <property type="entry name" value="ATP-synt_Vo_c_ATP6F_rpt1"/>
    <property type="match status" value="1"/>
</dbReference>
<dbReference type="CDD" id="cd18178">
    <property type="entry name" value="ATP-synt_Vo_c_ATP6F_rpt2"/>
    <property type="match status" value="1"/>
</dbReference>
<dbReference type="FunFam" id="1.20.120.610:FF:000002">
    <property type="entry name" value="V-type proton ATPase proteolipid subunit"/>
    <property type="match status" value="1"/>
</dbReference>
<dbReference type="Gene3D" id="1.20.120.610">
    <property type="entry name" value="lithium bound rotor ring of v- atpase"/>
    <property type="match status" value="1"/>
</dbReference>
<dbReference type="InterPro" id="IPR002379">
    <property type="entry name" value="ATPase_proteolipid_c-like_dom"/>
</dbReference>
<dbReference type="InterPro" id="IPR000245">
    <property type="entry name" value="ATPase_proteolipid_csu"/>
</dbReference>
<dbReference type="InterPro" id="IPR035921">
    <property type="entry name" value="F/V-ATP_Csub_sf"/>
</dbReference>
<dbReference type="PANTHER" id="PTHR10263">
    <property type="entry name" value="V-TYPE PROTON ATPASE PROTEOLIPID SUBUNIT"/>
    <property type="match status" value="1"/>
</dbReference>
<dbReference type="Pfam" id="PF00137">
    <property type="entry name" value="ATP-synt_C"/>
    <property type="match status" value="2"/>
</dbReference>
<dbReference type="PRINTS" id="PR00122">
    <property type="entry name" value="VACATPASE"/>
</dbReference>
<dbReference type="SUPFAM" id="SSF81333">
    <property type="entry name" value="F1F0 ATP synthase subunit C"/>
    <property type="match status" value="2"/>
</dbReference>
<feature type="chain" id="PRO_0000285672" description="V-type proton ATPase 21 kDa proteolipid subunit c''">
    <location>
        <begin position="1"/>
        <end position="205"/>
    </location>
</feature>
<feature type="topological domain" description="Lumenal" evidence="2">
    <location>
        <begin position="1"/>
        <end position="3"/>
    </location>
</feature>
<feature type="transmembrane region" description="Helical" evidence="2">
    <location>
        <begin position="4"/>
        <end position="24"/>
    </location>
</feature>
<feature type="topological domain" description="Cytoplasmic" evidence="2">
    <location>
        <begin position="25"/>
        <end position="51"/>
    </location>
</feature>
<feature type="transmembrane region" description="Helical" evidence="2">
    <location>
        <begin position="52"/>
        <end position="72"/>
    </location>
</feature>
<feature type="topological domain" description="Lumenal" evidence="2">
    <location>
        <begin position="73"/>
        <end position="90"/>
    </location>
</feature>
<feature type="transmembrane region" description="Helical" evidence="2">
    <location>
        <begin position="91"/>
        <end position="111"/>
    </location>
</feature>
<feature type="topological domain" description="Cytoplasmic" evidence="2">
    <location>
        <begin position="112"/>
        <end position="137"/>
    </location>
</feature>
<feature type="transmembrane region" description="Helical" evidence="2">
    <location>
        <begin position="138"/>
        <end position="158"/>
    </location>
</feature>
<feature type="topological domain" description="Lumenal" evidence="2">
    <location>
        <begin position="159"/>
        <end position="175"/>
    </location>
</feature>
<feature type="transmembrane region" description="Helical" evidence="2">
    <location>
        <begin position="176"/>
        <end position="196"/>
    </location>
</feature>
<feature type="topological domain" description="Cytoplasmic" evidence="2">
    <location>
        <begin position="197"/>
        <end position="205"/>
    </location>
</feature>
<feature type="site" description="Essential for proton translocation" evidence="5">
    <location>
        <position position="98"/>
    </location>
</feature>
<feature type="helix" evidence="8">
    <location>
        <begin position="5"/>
        <end position="26"/>
    </location>
</feature>
<feature type="strand" evidence="8">
    <location>
        <begin position="27"/>
        <end position="30"/>
    </location>
</feature>
<feature type="helix" evidence="8">
    <location>
        <begin position="31"/>
        <end position="34"/>
    </location>
</feature>
<feature type="helix" evidence="8">
    <location>
        <begin position="37"/>
        <end position="43"/>
    </location>
</feature>
<feature type="helix" evidence="8">
    <location>
        <begin position="46"/>
        <end position="79"/>
    </location>
</feature>
<feature type="turn" evidence="8">
    <location>
        <begin position="80"/>
        <end position="82"/>
    </location>
</feature>
<feature type="helix" evidence="8">
    <location>
        <begin position="86"/>
        <end position="89"/>
    </location>
</feature>
<feature type="helix" evidence="8">
    <location>
        <begin position="92"/>
        <end position="96"/>
    </location>
</feature>
<feature type="helix" evidence="8">
    <location>
        <begin position="99"/>
        <end position="113"/>
    </location>
</feature>
<feature type="turn" evidence="8">
    <location>
        <begin position="123"/>
        <end position="125"/>
    </location>
</feature>
<feature type="helix" evidence="8">
    <location>
        <begin position="128"/>
        <end position="168"/>
    </location>
</feature>
<feature type="helix" evidence="8">
    <location>
        <begin position="173"/>
        <end position="197"/>
    </location>
</feature>